<accession>V5H924</accession>
<name>MIAL_IXORI</name>
<evidence type="ECO:0000255" key="1"/>
<evidence type="ECO:0000269" key="2">
    <source>
    </source>
</evidence>
<evidence type="ECO:0000269" key="3">
    <source>
    </source>
</evidence>
<evidence type="ECO:0000303" key="4">
    <source>
    </source>
</evidence>
<evidence type="ECO:0000303" key="5">
    <source>
    </source>
</evidence>
<evidence type="ECO:0000305" key="6"/>
<evidence type="ECO:0000312" key="7">
    <source>
        <dbReference type="EMBL" id="JAB71122.1"/>
    </source>
</evidence>
<evidence type="ECO:0007744" key="8">
    <source>
        <dbReference type="PDB" id="6ZTK"/>
    </source>
</evidence>
<dbReference type="EMBL" id="GANP01013346">
    <property type="protein sequence ID" value="JAB71122.1"/>
    <property type="molecule type" value="mRNA"/>
</dbReference>
<dbReference type="PDB" id="6ZTK">
    <property type="method" value="X-ray"/>
    <property type="resolution" value="1.55 A"/>
    <property type="chains" value="A/B=9-140"/>
</dbReference>
<dbReference type="PDBsum" id="6ZTK"/>
<dbReference type="SMR" id="V5H924"/>
<dbReference type="MEROPS" id="I25.049"/>
<dbReference type="GO" id="GO:0005737">
    <property type="term" value="C:cytoplasm"/>
    <property type="evidence" value="ECO:0007669"/>
    <property type="project" value="TreeGrafter"/>
</dbReference>
<dbReference type="GO" id="GO:0005615">
    <property type="term" value="C:extracellular space"/>
    <property type="evidence" value="ECO:0007669"/>
    <property type="project" value="TreeGrafter"/>
</dbReference>
<dbReference type="GO" id="GO:0031982">
    <property type="term" value="C:vesicle"/>
    <property type="evidence" value="ECO:0007669"/>
    <property type="project" value="TreeGrafter"/>
</dbReference>
<dbReference type="GO" id="GO:0004869">
    <property type="term" value="F:cysteine-type endopeptidase inhibitor activity"/>
    <property type="evidence" value="ECO:0007669"/>
    <property type="project" value="UniProtKB-KW"/>
</dbReference>
<dbReference type="CDD" id="cd00042">
    <property type="entry name" value="CY"/>
    <property type="match status" value="1"/>
</dbReference>
<dbReference type="Gene3D" id="3.10.450.10">
    <property type="match status" value="1"/>
</dbReference>
<dbReference type="InterPro" id="IPR000010">
    <property type="entry name" value="Cystatin_dom"/>
</dbReference>
<dbReference type="InterPro" id="IPR046350">
    <property type="entry name" value="Cystatin_sf"/>
</dbReference>
<dbReference type="PANTHER" id="PTHR46186">
    <property type="entry name" value="CYSTATIN"/>
    <property type="match status" value="1"/>
</dbReference>
<dbReference type="PANTHER" id="PTHR46186:SF2">
    <property type="entry name" value="CYSTATIN"/>
    <property type="match status" value="1"/>
</dbReference>
<dbReference type="Pfam" id="PF00031">
    <property type="entry name" value="Cystatin"/>
    <property type="match status" value="1"/>
</dbReference>
<dbReference type="SMART" id="SM00043">
    <property type="entry name" value="CY"/>
    <property type="match status" value="1"/>
</dbReference>
<dbReference type="SUPFAM" id="SSF54403">
    <property type="entry name" value="Cystatin/monellin"/>
    <property type="match status" value="1"/>
</dbReference>
<proteinExistence type="evidence at protein level"/>
<reference evidence="7" key="1">
    <citation type="journal article" date="2015" name="Sci. Rep.">
        <title>Tissue- and time-dependent transcription in Ixodes ricinus salivary glands and midguts when blood feeding on the vertebrate host.</title>
        <authorList>
            <person name="Kotsyfakis M."/>
            <person name="Schwarz A."/>
            <person name="Erhart J."/>
            <person name="Ribeiro J.M."/>
        </authorList>
    </citation>
    <scope>NUCLEOTIDE SEQUENCE [LARGE SCALE MRNA]</scope>
    <source>
        <tissue evidence="7">Midgut</tissue>
        <tissue evidence="7">Salivary gland</tissue>
    </source>
</reference>
<reference evidence="6" key="2">
    <citation type="journal article" date="2024" name="Front. Immunol.">
        <title>Tick cysteine protease inhibitors suppress immune responses in mannan-induced psoriasis-like inflammation.</title>
        <authorList>
            <person name="Wu H."/>
            <person name="Jmel M.A."/>
            <person name="Chai J."/>
            <person name="Tian M."/>
            <person name="Xu X."/>
            <person name="Hui Y."/>
            <person name="Nandakumar K.S."/>
            <person name="Kotsyfakis M."/>
        </authorList>
    </citation>
    <scope>FUNCTION</scope>
</reference>
<reference evidence="8" key="3">
    <citation type="journal article" date="2021" name="Int. J. Mol. Sci.">
        <title>Mialostatin, a Novel Midgut Cystatin from &lt;i&gt;Ixodes ricinus&lt;/i&gt; Ticks: Crystal Structure and Regulation of Host Blood Digestion.</title>
        <authorList>
            <person name="Kotal J."/>
            <person name="Busa M."/>
            <person name="Urbanova V."/>
            <person name="Rezacova P."/>
            <person name="Chmelar J."/>
            <person name="Langhansova H."/>
            <person name="Sojka D."/>
            <person name="Mares M."/>
            <person name="Kotsyfakis M."/>
        </authorList>
    </citation>
    <scope>X-RAY CRYSTALLOGRAPHY (1.55 ANGSTROMS) OF 9-140</scope>
    <scope>IDENTIFICATION BY MASS SPECTROMETRY</scope>
    <scope>FUNCTION</scope>
    <scope>SUBCELLULAR LOCATION</scope>
    <scope>TISSUE SPECIFICITY</scope>
    <scope>INDUCTION BY BLOOD FEEDING</scope>
    <scope>DISULFIDE BONDS</scope>
</reference>
<protein>
    <recommendedName>
        <fullName evidence="4 5">Mialostatin</fullName>
    </recommendedName>
</protein>
<sequence length="140" mass="15590">MAFFKSAVFLVCVVLAAAGSASRSKRALVGGWKTQDPTNPKFENLAHYAVSTQVEGREYYDTVLELLEVQTQIVAGVNYKLKFTTTQSTCKIETGVEYSKELCQPKTNKVEAVCTSIIYTVPWQNIKRVLSYHCDAPNDV</sequence>
<comment type="function">
    <text evidence="2 3">Inhibitor of cysteine proteinases (PubMed:34065290, PubMed:38444844). Inhibits several endogenous midgut digestive cysteine proteases, such as cathepsin L1, L3, B and C, but not aspartic protease cathepsin D1 and cysteine protease legumain (PubMed:34065290). Inhibits proteolysis of blood proteins catalyzed by tick gut cysteine cathepsins (PubMed:34065290). Inhibits host cathepsin B (CSTB), C (CTSC), H (CTSH), K (CTSK), L (CTSL) and S (CTSS) (PubMed:34065290, PubMed:38444844).</text>
</comment>
<comment type="subcellular location">
    <subcellularLocation>
        <location evidence="2">Secreted</location>
    </subcellularLocation>
</comment>
<comment type="tissue specificity">
    <text evidence="2">Expressed in midgut (at protein level).</text>
</comment>
<comment type="induction">
    <text evidence="2">Up-regulated following blood feeding.</text>
</comment>
<comment type="miscellaneous">
    <text evidence="3">Decreases symptoms in mouse model of mannan-induced psoriasis-like inflammation by modulating immune responses.</text>
</comment>
<comment type="similarity">
    <text evidence="6">Belongs to the cystatin family.</text>
</comment>
<keyword id="KW-0002">3D-structure</keyword>
<keyword id="KW-1015">Disulfide bond</keyword>
<keyword id="KW-0646">Protease inhibitor</keyword>
<keyword id="KW-0964">Secreted</keyword>
<keyword id="KW-0732">Signal</keyword>
<keyword id="KW-0789">Thiol protease inhibitor</keyword>
<feature type="signal peptide" evidence="1">
    <location>
        <begin position="1"/>
        <end position="18"/>
    </location>
</feature>
<feature type="chain" id="PRO_5018764650" description="Mialostatin" evidence="1">
    <location>
        <begin position="19"/>
        <end position="140"/>
    </location>
</feature>
<feature type="disulfide bond" evidence="2 8">
    <location>
        <begin position="90"/>
        <end position="103"/>
    </location>
</feature>
<feature type="disulfide bond" evidence="2 8">
    <location>
        <begin position="114"/>
        <end position="134"/>
    </location>
</feature>
<organism evidence="7">
    <name type="scientific">Ixodes ricinus</name>
    <name type="common">Common tick</name>
    <name type="synonym">Acarus ricinus</name>
    <dbReference type="NCBI Taxonomy" id="34613"/>
    <lineage>
        <taxon>Eukaryota</taxon>
        <taxon>Metazoa</taxon>
        <taxon>Ecdysozoa</taxon>
        <taxon>Arthropoda</taxon>
        <taxon>Chelicerata</taxon>
        <taxon>Arachnida</taxon>
        <taxon>Acari</taxon>
        <taxon>Parasitiformes</taxon>
        <taxon>Ixodida</taxon>
        <taxon>Ixodoidea</taxon>
        <taxon>Ixodidae</taxon>
        <taxon>Ixodinae</taxon>
        <taxon>Ixodes</taxon>
    </lineage>
</organism>